<evidence type="ECO:0000250" key="1"/>
<evidence type="ECO:0000255" key="2"/>
<evidence type="ECO:0000256" key="3">
    <source>
        <dbReference type="SAM" id="MobiDB-lite"/>
    </source>
</evidence>
<evidence type="ECO:0000269" key="4">
    <source>
    </source>
</evidence>
<evidence type="ECO:0000305" key="5"/>
<evidence type="ECO:0000312" key="6">
    <source>
        <dbReference type="EMBL" id="AAD20564.1"/>
    </source>
</evidence>
<feature type="chain" id="PRO_0000318073" description="1-aminocyclopropane-1-carboxylate synthase-like protein 1">
    <location>
        <begin position="1"/>
        <end position="618"/>
    </location>
</feature>
<feature type="region of interest" description="Disordered" evidence="3">
    <location>
        <begin position="11"/>
        <end position="54"/>
    </location>
</feature>
<feature type="compositionally biased region" description="Low complexity" evidence="3">
    <location>
        <begin position="11"/>
        <end position="26"/>
    </location>
</feature>
<feature type="compositionally biased region" description="Polar residues" evidence="3">
    <location>
        <begin position="27"/>
        <end position="45"/>
    </location>
</feature>
<feature type="binding site" evidence="1">
    <location>
        <position position="122"/>
    </location>
    <ligand>
        <name>substrate</name>
    </ligand>
</feature>
<feature type="modified residue" description="N6-(pyridoxal phosphate)lysine" evidence="1">
    <location>
        <position position="340"/>
    </location>
</feature>
<dbReference type="EMBL" id="AF108420">
    <property type="protein sequence ID" value="AAD20564.1"/>
    <property type="molecule type" value="Genomic_DNA"/>
</dbReference>
<dbReference type="SMR" id="Q9W698"/>
<dbReference type="FunCoup" id="Q9W698">
    <property type="interactions" value="44"/>
</dbReference>
<dbReference type="STRING" id="31033.ENSTRUP00000002426"/>
<dbReference type="eggNOG" id="KOG0256">
    <property type="taxonomic scope" value="Eukaryota"/>
</dbReference>
<dbReference type="InParanoid" id="Q9W698"/>
<dbReference type="Proteomes" id="UP000005226">
    <property type="component" value="Unplaced"/>
</dbReference>
<dbReference type="GO" id="GO:0030170">
    <property type="term" value="F:pyridoxal phosphate binding"/>
    <property type="evidence" value="ECO:0007669"/>
    <property type="project" value="InterPro"/>
</dbReference>
<dbReference type="GO" id="GO:0008483">
    <property type="term" value="F:transaminase activity"/>
    <property type="evidence" value="ECO:0007669"/>
    <property type="project" value="TreeGrafter"/>
</dbReference>
<dbReference type="GO" id="GO:0006520">
    <property type="term" value="P:amino acid metabolic process"/>
    <property type="evidence" value="ECO:0007669"/>
    <property type="project" value="TreeGrafter"/>
</dbReference>
<dbReference type="GO" id="GO:0009058">
    <property type="term" value="P:biosynthetic process"/>
    <property type="evidence" value="ECO:0007669"/>
    <property type="project" value="InterPro"/>
</dbReference>
<dbReference type="CDD" id="cd00609">
    <property type="entry name" value="AAT_like"/>
    <property type="match status" value="1"/>
</dbReference>
<dbReference type="Gene3D" id="3.90.1150.10">
    <property type="entry name" value="Aspartate Aminotransferase, domain 1"/>
    <property type="match status" value="1"/>
</dbReference>
<dbReference type="Gene3D" id="3.40.640.10">
    <property type="entry name" value="Type I PLP-dependent aspartate aminotransferase-like (Major domain)"/>
    <property type="match status" value="1"/>
</dbReference>
<dbReference type="InterPro" id="IPR004839">
    <property type="entry name" value="Aminotransferase_I/II_large"/>
</dbReference>
<dbReference type="InterPro" id="IPR050478">
    <property type="entry name" value="Ethylene_sulfur-biosynth"/>
</dbReference>
<dbReference type="InterPro" id="IPR004838">
    <property type="entry name" value="NHTrfase_class1_PyrdxlP-BS"/>
</dbReference>
<dbReference type="InterPro" id="IPR015424">
    <property type="entry name" value="PyrdxlP-dep_Trfase"/>
</dbReference>
<dbReference type="InterPro" id="IPR015421">
    <property type="entry name" value="PyrdxlP-dep_Trfase_major"/>
</dbReference>
<dbReference type="InterPro" id="IPR015422">
    <property type="entry name" value="PyrdxlP-dep_Trfase_small"/>
</dbReference>
<dbReference type="PANTHER" id="PTHR43795:SF17">
    <property type="entry name" value="1-AMINOCYCLOPROPANE-1-CARBOXYLATE SYNTHASE-LIKE PROTEIN 1"/>
    <property type="match status" value="1"/>
</dbReference>
<dbReference type="PANTHER" id="PTHR43795">
    <property type="entry name" value="BIFUNCTIONAL ASPARTATE AMINOTRANSFERASE AND GLUTAMATE/ASPARTATE-PREPHENATE AMINOTRANSFERASE-RELATED"/>
    <property type="match status" value="1"/>
</dbReference>
<dbReference type="Pfam" id="PF00155">
    <property type="entry name" value="Aminotran_1_2"/>
    <property type="match status" value="1"/>
</dbReference>
<dbReference type="PRINTS" id="PR00753">
    <property type="entry name" value="ACCSYNTHASE"/>
</dbReference>
<dbReference type="SUPFAM" id="SSF53383">
    <property type="entry name" value="PLP-dependent transferases"/>
    <property type="match status" value="1"/>
</dbReference>
<dbReference type="PROSITE" id="PS00105">
    <property type="entry name" value="AA_TRANSFER_CLASS_1"/>
    <property type="match status" value="1"/>
</dbReference>
<protein>
    <recommendedName>
        <fullName>1-aminocyclopropane-1-carboxylate synthase-like protein 1</fullName>
        <shortName>ACC synthase-like protein 1</shortName>
    </recommendedName>
</protein>
<gene>
    <name type="primary">accs</name>
</gene>
<proteinExistence type="inferred from homology"/>
<organism>
    <name type="scientific">Takifugu rubripes</name>
    <name type="common">Japanese pufferfish</name>
    <name type="synonym">Fugu rubripes</name>
    <dbReference type="NCBI Taxonomy" id="31033"/>
    <lineage>
        <taxon>Eukaryota</taxon>
        <taxon>Metazoa</taxon>
        <taxon>Chordata</taxon>
        <taxon>Craniata</taxon>
        <taxon>Vertebrata</taxon>
        <taxon>Euteleostomi</taxon>
        <taxon>Actinopterygii</taxon>
        <taxon>Neopterygii</taxon>
        <taxon>Teleostei</taxon>
        <taxon>Neoteleostei</taxon>
        <taxon>Acanthomorphata</taxon>
        <taxon>Eupercaria</taxon>
        <taxon>Tetraodontiformes</taxon>
        <taxon>Tetradontoidea</taxon>
        <taxon>Tetraodontidae</taxon>
        <taxon>Takifugu</taxon>
    </lineage>
</organism>
<reference evidence="6" key="1">
    <citation type="journal article" date="2000" name="Gene">
        <title>Characterization of the recombinase activating gene-1 and 2 locus in the Japanese pufferfish, Fugu rubripes.</title>
        <authorList>
            <person name="Peixoto B.R."/>
            <person name="Mikawa Y."/>
            <person name="Brenner S."/>
        </authorList>
    </citation>
    <scope>NUCLEOTIDE SEQUENCE [GENOMIC DNA]</scope>
</reference>
<reference evidence="5" key="2">
    <citation type="journal article" date="2001" name="Gene">
        <title>The human cDNA for a homologue of the plant enzyme 1-aminocyclopropane-1-carboxylate synthase encodes a protein lacking that activity.</title>
        <authorList>
            <person name="Koch K.A."/>
            <person name="Capitani G."/>
            <person name="Gruetter M.G."/>
            <person name="Kirsch J.F."/>
        </authorList>
    </citation>
    <scope>LACK OF ENZYME ACTIVITY</scope>
</reference>
<accession>Q9W698</accession>
<keyword id="KW-0663">Pyridoxal phosphate</keyword>
<keyword id="KW-1185">Reference proteome</keyword>
<sequence>MLTEALVAVRQGTQTPAAQTTCAPSTMSSSSRPPLETLQAQSVSADETPGSALPACAQPCETARSATPTGGETPNRSRYLSHRGNSIRQQQGILQEGFLLYSLDKFHETDKPDGIINLGTSENKLCHDLLHERLTRPDMLLLDPPLLQYPDWSGHQFLREEVAKFLTDYCCSPKPLKAENVVVMNGCASLFSCIASVICDPKDAILISTPFYGAITEHLGLYSDVKLYHIHLDCEASGEDGRLFHLTVDKLEEGLRRAEHEGFIVRGLVLMNPHNPLADIYTPKEMVGFLEFAKRNELHTIVDEVYMLSVFDESVTFDSVLSLESVPDPQRTHVMWGLGKDFAMAGIRVGTLYSESRDLVEAVAKLGAFHGIPGTTQRQVAQLLQDREWIDTQYLPRNRSRLKAARSYVTGELRGLDVPYLDRSAAMFVWADLRKFLAEPSFEEEMRLWRHFLKHKVVLSCGQAFSCSTPGWFRIVFSDQDRRLKLGMKRIKEALEEYKDQITVTDCYSIKDGGPRVRASGKDSDNAAIVGSTLPQGKSSDMLEEKDHTVQAGLGADELVLRDCQPSKPAEGLDSLIGTLRHQIRSSDWLEKNTPELSAGEDPEILDVFKALLERARK</sequence>
<comment type="similarity">
    <text evidence="2">Belongs to the class-I pyridoxal-phosphate-dependent aminotransferase family.</text>
</comment>
<comment type="caution">
    <text evidence="4">Similar to plant 1-aminocyclopropane-1-carboxylate synthases but lacks a number of residues which are necessary for activity.</text>
</comment>
<name>1A1L1_TAKRU</name>